<evidence type="ECO:0000255" key="1">
    <source>
        <dbReference type="HAMAP-Rule" id="MF_00123"/>
    </source>
</evidence>
<accession>Q8EM45</accession>
<reference key="1">
    <citation type="journal article" date="2002" name="Nucleic Acids Res.">
        <title>Genome sequence of Oceanobacillus iheyensis isolated from the Iheya Ridge and its unexpected adaptive capabilities to extreme environments.</title>
        <authorList>
            <person name="Takami H."/>
            <person name="Takaki Y."/>
            <person name="Uchiyama I."/>
        </authorList>
    </citation>
    <scope>NUCLEOTIDE SEQUENCE [LARGE SCALE GENOMIC DNA]</scope>
    <source>
        <strain>DSM 14371 / CIP 107618 / JCM 11309 / KCTC 3954 / HTE831</strain>
    </source>
</reference>
<feature type="chain" id="PRO_0000151585" description="Arginine--tRNA ligase">
    <location>
        <begin position="1"/>
        <end position="556"/>
    </location>
</feature>
<feature type="short sequence motif" description="'HIGH' region">
    <location>
        <begin position="132"/>
        <end position="142"/>
    </location>
</feature>
<keyword id="KW-0030">Aminoacyl-tRNA synthetase</keyword>
<keyword id="KW-0067">ATP-binding</keyword>
<keyword id="KW-0963">Cytoplasm</keyword>
<keyword id="KW-0436">Ligase</keyword>
<keyword id="KW-0547">Nucleotide-binding</keyword>
<keyword id="KW-0648">Protein biosynthesis</keyword>
<keyword id="KW-1185">Reference proteome</keyword>
<sequence>MNVLEQTEQKLKEQIHHAVIHAELATEDQVPDIILEKPKDKAHGDFATNIAMQLARVAKKAPRQIADDIASKLNKSEASVEKVEIAGPGFINFFMKQDFLGEVIDTVLSAGDNYGKSTGGNGEKVQVEFVSVNPTGDLHLGHARNAAFGDVLCNVFAAAGYEVEREYYINDAGNQINNLGLSVEARYLQEIGQDVDMPEDGYQGQAIIEIAKELVKKDGEKWADKDHEERLDFFKEYGLKASLRNIESDLKDFRVEFDHWFSERSLFKDGQIDDTLAVLDDGGYTFEKDGALWFKTTEFGDDKDRVLIKGDGNYTYLTPDIAYHKNKLDRGFDRIINVWGSDHHGYIPRMRAALQALGYPVEKFDVKIIQMVNLFEAGEKVKMSKRTGKAVSLRELMDEVGIDAVRYYFVARSNDSQLDFDMDLAKSQSNDNPVYYAQYAHARICTMLSQAKSKGFNTEAEFDASLLTAEKELDLLKKIGELPQMIVDAADKHTPHKVTQYIFELATLLHSFYNAEKVLDADNEARTHARIALMKAVRQTLANAMTIIGISAPEKM</sequence>
<name>SYR_OCEIH</name>
<protein>
    <recommendedName>
        <fullName evidence="1">Arginine--tRNA ligase</fullName>
        <ecNumber evidence="1">6.1.1.19</ecNumber>
    </recommendedName>
    <alternativeName>
        <fullName evidence="1">Arginyl-tRNA synthetase</fullName>
        <shortName evidence="1">ArgRS</shortName>
    </alternativeName>
</protein>
<gene>
    <name evidence="1" type="primary">argS</name>
    <name type="ordered locus">OB3015</name>
</gene>
<dbReference type="EC" id="6.1.1.19" evidence="1"/>
<dbReference type="EMBL" id="BA000028">
    <property type="protein sequence ID" value="BAC14971.1"/>
    <property type="molecule type" value="Genomic_DNA"/>
</dbReference>
<dbReference type="RefSeq" id="WP_011067411.1">
    <property type="nucleotide sequence ID" value="NC_004193.1"/>
</dbReference>
<dbReference type="SMR" id="Q8EM45"/>
<dbReference type="STRING" id="221109.gene:10735267"/>
<dbReference type="KEGG" id="oih:OB3015"/>
<dbReference type="eggNOG" id="COG0018">
    <property type="taxonomic scope" value="Bacteria"/>
</dbReference>
<dbReference type="HOGENOM" id="CLU_006406_0_1_9"/>
<dbReference type="OrthoDB" id="9805987at2"/>
<dbReference type="PhylomeDB" id="Q8EM45"/>
<dbReference type="Proteomes" id="UP000000822">
    <property type="component" value="Chromosome"/>
</dbReference>
<dbReference type="GO" id="GO:0005737">
    <property type="term" value="C:cytoplasm"/>
    <property type="evidence" value="ECO:0007669"/>
    <property type="project" value="UniProtKB-SubCell"/>
</dbReference>
<dbReference type="GO" id="GO:0004814">
    <property type="term" value="F:arginine-tRNA ligase activity"/>
    <property type="evidence" value="ECO:0007669"/>
    <property type="project" value="UniProtKB-UniRule"/>
</dbReference>
<dbReference type="GO" id="GO:0005524">
    <property type="term" value="F:ATP binding"/>
    <property type="evidence" value="ECO:0007669"/>
    <property type="project" value="UniProtKB-UniRule"/>
</dbReference>
<dbReference type="GO" id="GO:0006420">
    <property type="term" value="P:arginyl-tRNA aminoacylation"/>
    <property type="evidence" value="ECO:0007669"/>
    <property type="project" value="UniProtKB-UniRule"/>
</dbReference>
<dbReference type="CDD" id="cd07956">
    <property type="entry name" value="Anticodon_Ia_Arg"/>
    <property type="match status" value="1"/>
</dbReference>
<dbReference type="CDD" id="cd00671">
    <property type="entry name" value="ArgRS_core"/>
    <property type="match status" value="1"/>
</dbReference>
<dbReference type="FunFam" id="1.10.730.10:FF:000008">
    <property type="entry name" value="Arginine--tRNA ligase"/>
    <property type="match status" value="1"/>
</dbReference>
<dbReference type="FunFam" id="3.30.1360.70:FF:000003">
    <property type="entry name" value="Arginine--tRNA ligase"/>
    <property type="match status" value="1"/>
</dbReference>
<dbReference type="FunFam" id="3.40.50.620:FF:000062">
    <property type="entry name" value="Arginine--tRNA ligase"/>
    <property type="match status" value="1"/>
</dbReference>
<dbReference type="Gene3D" id="3.30.1360.70">
    <property type="entry name" value="Arginyl tRNA synthetase N-terminal domain"/>
    <property type="match status" value="1"/>
</dbReference>
<dbReference type="Gene3D" id="3.40.50.620">
    <property type="entry name" value="HUPs"/>
    <property type="match status" value="1"/>
</dbReference>
<dbReference type="Gene3D" id="1.10.730.10">
    <property type="entry name" value="Isoleucyl-tRNA Synthetase, Domain 1"/>
    <property type="match status" value="1"/>
</dbReference>
<dbReference type="HAMAP" id="MF_00123">
    <property type="entry name" value="Arg_tRNA_synth"/>
    <property type="match status" value="1"/>
</dbReference>
<dbReference type="InterPro" id="IPR001412">
    <property type="entry name" value="aa-tRNA-synth_I_CS"/>
</dbReference>
<dbReference type="InterPro" id="IPR001278">
    <property type="entry name" value="Arg-tRNA-ligase"/>
</dbReference>
<dbReference type="InterPro" id="IPR005148">
    <property type="entry name" value="Arg-tRNA-synth_N"/>
</dbReference>
<dbReference type="InterPro" id="IPR036695">
    <property type="entry name" value="Arg-tRNA-synth_N_sf"/>
</dbReference>
<dbReference type="InterPro" id="IPR035684">
    <property type="entry name" value="ArgRS_core"/>
</dbReference>
<dbReference type="InterPro" id="IPR008909">
    <property type="entry name" value="DALR_anticod-bd"/>
</dbReference>
<dbReference type="InterPro" id="IPR014729">
    <property type="entry name" value="Rossmann-like_a/b/a_fold"/>
</dbReference>
<dbReference type="InterPro" id="IPR009080">
    <property type="entry name" value="tRNAsynth_Ia_anticodon-bd"/>
</dbReference>
<dbReference type="NCBIfam" id="TIGR00456">
    <property type="entry name" value="argS"/>
    <property type="match status" value="1"/>
</dbReference>
<dbReference type="PANTHER" id="PTHR11956:SF5">
    <property type="entry name" value="ARGININE--TRNA LIGASE, CYTOPLASMIC"/>
    <property type="match status" value="1"/>
</dbReference>
<dbReference type="PANTHER" id="PTHR11956">
    <property type="entry name" value="ARGINYL-TRNA SYNTHETASE"/>
    <property type="match status" value="1"/>
</dbReference>
<dbReference type="Pfam" id="PF03485">
    <property type="entry name" value="Arg_tRNA_synt_N"/>
    <property type="match status" value="1"/>
</dbReference>
<dbReference type="Pfam" id="PF05746">
    <property type="entry name" value="DALR_1"/>
    <property type="match status" value="1"/>
</dbReference>
<dbReference type="Pfam" id="PF00750">
    <property type="entry name" value="tRNA-synt_1d"/>
    <property type="match status" value="1"/>
</dbReference>
<dbReference type="PRINTS" id="PR01038">
    <property type="entry name" value="TRNASYNTHARG"/>
</dbReference>
<dbReference type="SMART" id="SM01016">
    <property type="entry name" value="Arg_tRNA_synt_N"/>
    <property type="match status" value="1"/>
</dbReference>
<dbReference type="SMART" id="SM00836">
    <property type="entry name" value="DALR_1"/>
    <property type="match status" value="1"/>
</dbReference>
<dbReference type="SUPFAM" id="SSF47323">
    <property type="entry name" value="Anticodon-binding domain of a subclass of class I aminoacyl-tRNA synthetases"/>
    <property type="match status" value="1"/>
</dbReference>
<dbReference type="SUPFAM" id="SSF55190">
    <property type="entry name" value="Arginyl-tRNA synthetase (ArgRS), N-terminal 'additional' domain"/>
    <property type="match status" value="1"/>
</dbReference>
<dbReference type="SUPFAM" id="SSF52374">
    <property type="entry name" value="Nucleotidylyl transferase"/>
    <property type="match status" value="1"/>
</dbReference>
<dbReference type="PROSITE" id="PS00178">
    <property type="entry name" value="AA_TRNA_LIGASE_I"/>
    <property type="match status" value="1"/>
</dbReference>
<organism>
    <name type="scientific">Oceanobacillus iheyensis (strain DSM 14371 / CIP 107618 / JCM 11309 / KCTC 3954 / HTE831)</name>
    <dbReference type="NCBI Taxonomy" id="221109"/>
    <lineage>
        <taxon>Bacteria</taxon>
        <taxon>Bacillati</taxon>
        <taxon>Bacillota</taxon>
        <taxon>Bacilli</taxon>
        <taxon>Bacillales</taxon>
        <taxon>Bacillaceae</taxon>
        <taxon>Oceanobacillus</taxon>
    </lineage>
</organism>
<proteinExistence type="inferred from homology"/>
<comment type="catalytic activity">
    <reaction evidence="1">
        <text>tRNA(Arg) + L-arginine + ATP = L-arginyl-tRNA(Arg) + AMP + diphosphate</text>
        <dbReference type="Rhea" id="RHEA:20301"/>
        <dbReference type="Rhea" id="RHEA-COMP:9658"/>
        <dbReference type="Rhea" id="RHEA-COMP:9673"/>
        <dbReference type="ChEBI" id="CHEBI:30616"/>
        <dbReference type="ChEBI" id="CHEBI:32682"/>
        <dbReference type="ChEBI" id="CHEBI:33019"/>
        <dbReference type="ChEBI" id="CHEBI:78442"/>
        <dbReference type="ChEBI" id="CHEBI:78513"/>
        <dbReference type="ChEBI" id="CHEBI:456215"/>
        <dbReference type="EC" id="6.1.1.19"/>
    </reaction>
</comment>
<comment type="subunit">
    <text evidence="1">Monomer.</text>
</comment>
<comment type="subcellular location">
    <subcellularLocation>
        <location evidence="1">Cytoplasm</location>
    </subcellularLocation>
</comment>
<comment type="similarity">
    <text evidence="1">Belongs to the class-I aminoacyl-tRNA synthetase family.</text>
</comment>